<reference key="1">
    <citation type="journal article" date="2004" name="Nature">
        <title>Genome evolution in yeasts.</title>
        <authorList>
            <person name="Dujon B."/>
            <person name="Sherman D."/>
            <person name="Fischer G."/>
            <person name="Durrens P."/>
            <person name="Casaregola S."/>
            <person name="Lafontaine I."/>
            <person name="de Montigny J."/>
            <person name="Marck C."/>
            <person name="Neuveglise C."/>
            <person name="Talla E."/>
            <person name="Goffard N."/>
            <person name="Frangeul L."/>
            <person name="Aigle M."/>
            <person name="Anthouard V."/>
            <person name="Babour A."/>
            <person name="Barbe V."/>
            <person name="Barnay S."/>
            <person name="Blanchin S."/>
            <person name="Beckerich J.-M."/>
            <person name="Beyne E."/>
            <person name="Bleykasten C."/>
            <person name="Boisrame A."/>
            <person name="Boyer J."/>
            <person name="Cattolico L."/>
            <person name="Confanioleri F."/>
            <person name="de Daruvar A."/>
            <person name="Despons L."/>
            <person name="Fabre E."/>
            <person name="Fairhead C."/>
            <person name="Ferry-Dumazet H."/>
            <person name="Groppi A."/>
            <person name="Hantraye F."/>
            <person name="Hennequin C."/>
            <person name="Jauniaux N."/>
            <person name="Joyet P."/>
            <person name="Kachouri R."/>
            <person name="Kerrest A."/>
            <person name="Koszul R."/>
            <person name="Lemaire M."/>
            <person name="Lesur I."/>
            <person name="Ma L."/>
            <person name="Muller H."/>
            <person name="Nicaud J.-M."/>
            <person name="Nikolski M."/>
            <person name="Oztas S."/>
            <person name="Ozier-Kalogeropoulos O."/>
            <person name="Pellenz S."/>
            <person name="Potier S."/>
            <person name="Richard G.-F."/>
            <person name="Straub M.-L."/>
            <person name="Suleau A."/>
            <person name="Swennen D."/>
            <person name="Tekaia F."/>
            <person name="Wesolowski-Louvel M."/>
            <person name="Westhof E."/>
            <person name="Wirth B."/>
            <person name="Zeniou-Meyer M."/>
            <person name="Zivanovic Y."/>
            <person name="Bolotin-Fukuhara M."/>
            <person name="Thierry A."/>
            <person name="Bouchier C."/>
            <person name="Caudron B."/>
            <person name="Scarpelli C."/>
            <person name="Gaillardin C."/>
            <person name="Weissenbach J."/>
            <person name="Wincker P."/>
            <person name="Souciet J.-L."/>
        </authorList>
    </citation>
    <scope>NUCLEOTIDE SEQUENCE [LARGE SCALE GENOMIC DNA]</scope>
    <source>
        <strain>CLIB 122 / E 150</strain>
    </source>
</reference>
<accession>Q6C9Z2</accession>
<comment type="function">
    <text evidence="1">Component of the Mediator complex, a coactivator involved in the regulated transcription of nearly all RNA polymerase II-dependent genes. Mediator functions as a bridge to convey information from gene-specific regulatory proteins to the basal RNA polymerase II transcription machinery. Mediator is recruited to promoters by direct interactions with regulatory proteins and serves as a scaffold for the assembly of a functional preinitiation complex with RNA polymerase II and the general transcription factors (By similarity).</text>
</comment>
<comment type="subunit">
    <text evidence="1">Component of the Mediator complex.</text>
</comment>
<comment type="subcellular location">
    <subcellularLocation>
        <location evidence="2">Nucleus</location>
    </subcellularLocation>
</comment>
<comment type="similarity">
    <text evidence="2">Belongs to the Mediator complex subunit 14 family.</text>
</comment>
<feature type="chain" id="PRO_0000304609" description="Mediator of RNA polymerase II transcription subunit 14">
    <location>
        <begin position="1"/>
        <end position="901"/>
    </location>
</feature>
<sequence>MKGSDIPHVEANYVDLGRAVGTVCDNAHRELANVLETLPSTPADVAKKQALLEVLVRARQEFVRTYVLTKWAKVSEDVTKCIDVVAWLHGQRNCFDNLNHMLVGLGRDLGAAKSRNPDLQTAVQVLTRGAPTTFGDHDMAPKKKLKPQTILRTLRDLNVLLSVQLAQSTDIPPQFKRYKIANGRATFTVANAFEVDVGIADDTLDGPFFFIDFRLLFGDRKELPPQTRGMLERAGNSALAQRGLSALYSLLMKFALNYKLALIYKQIMEMSKGLWSGTLRHRFYQERSLIALEYWVSQHATHRPKSTLEIGIFSESDLRIAVRWSRQGEEVPYSEHQIQFGGESTDVASLLEYVTTLHLKHIISCVYTKLRALLGDSSDMVSLCSDGHKLRFRLTSLRSTVFTVDRLTGKTVLENATSLILSAERSLNELVSRPDQAASVLFKLRLLSLENDIRTRACATGWTAQNVTLSTDEMKTHFGFTTRYVLFLRQPQWPSNWFVVVTVPEDGSLPLWWIAKLRVRKDTAWTAECMDRIHVNQDLDSLYDYELLTQMVTFASHRIVLHPILDELRAAKTPFRLLRSAQHTPVVAIDNSALVTSWSHSSLLILPEMSAGSMDMKLHVQGRAKTVMNLPSNDSIDFDASTGIYKLTLEGANTPGFSLVNKLKERLQQIEQIVSYIELIKDLGLELVTASMQQIKFKLGDAQVSVDIPSELNPNITLHLSPTDPHNIIHSYLQETLNSSGLRPVVWLLQTTRNLYTTLQKLQKTRGGDPEQLEKIISNLSISDLETRQKQLQPRLSIVPRSAAFVRLVYPGKMNIDVTLVRHSATLDGVKFFIKESPLELPPPPQPGQPPVAVPRKLQVWNGSVTPDVDVGKAVYLNDGIACEGDNVGKVLEWVDKQIGK</sequence>
<proteinExistence type="inferred from homology"/>
<gene>
    <name type="primary">RGR1</name>
    <name type="synonym">MED14</name>
    <name type="ordered locus">YALI0D07194g</name>
</gene>
<evidence type="ECO:0000250" key="1"/>
<evidence type="ECO:0000305" key="2"/>
<organism>
    <name type="scientific">Yarrowia lipolytica (strain CLIB 122 / E 150)</name>
    <name type="common">Yeast</name>
    <name type="synonym">Candida lipolytica</name>
    <dbReference type="NCBI Taxonomy" id="284591"/>
    <lineage>
        <taxon>Eukaryota</taxon>
        <taxon>Fungi</taxon>
        <taxon>Dikarya</taxon>
        <taxon>Ascomycota</taxon>
        <taxon>Saccharomycotina</taxon>
        <taxon>Dipodascomycetes</taxon>
        <taxon>Dipodascales</taxon>
        <taxon>Dipodascales incertae sedis</taxon>
        <taxon>Yarrowia</taxon>
    </lineage>
</organism>
<keyword id="KW-0010">Activator</keyword>
<keyword id="KW-0539">Nucleus</keyword>
<keyword id="KW-1185">Reference proteome</keyword>
<keyword id="KW-0804">Transcription</keyword>
<keyword id="KW-0805">Transcription regulation</keyword>
<dbReference type="EMBL" id="CR382130">
    <property type="protein sequence ID" value="CAG80708.1"/>
    <property type="molecule type" value="Genomic_DNA"/>
</dbReference>
<dbReference type="RefSeq" id="XP_502520.1">
    <property type="nucleotide sequence ID" value="XM_502520.1"/>
</dbReference>
<dbReference type="SMR" id="Q6C9Z2"/>
<dbReference type="FunCoup" id="Q6C9Z2">
    <property type="interactions" value="259"/>
</dbReference>
<dbReference type="STRING" id="284591.Q6C9Z2"/>
<dbReference type="EnsemblFungi" id="CAG80708">
    <property type="protein sequence ID" value="CAG80708"/>
    <property type="gene ID" value="YALI0_D07194g"/>
</dbReference>
<dbReference type="KEGG" id="yli:2910799"/>
<dbReference type="VEuPathDB" id="FungiDB:YALI0_D07194g"/>
<dbReference type="HOGENOM" id="CLU_283151_0_0_1"/>
<dbReference type="InParanoid" id="Q6C9Z2"/>
<dbReference type="OMA" id="FASHRIV"/>
<dbReference type="OrthoDB" id="1487at4891"/>
<dbReference type="Proteomes" id="UP000001300">
    <property type="component" value="Chromosome D"/>
</dbReference>
<dbReference type="GO" id="GO:0070847">
    <property type="term" value="C:core mediator complex"/>
    <property type="evidence" value="ECO:0000318"/>
    <property type="project" value="GO_Central"/>
</dbReference>
<dbReference type="GO" id="GO:0016592">
    <property type="term" value="C:mediator complex"/>
    <property type="evidence" value="ECO:0000318"/>
    <property type="project" value="GO_Central"/>
</dbReference>
<dbReference type="GO" id="GO:0003712">
    <property type="term" value="F:transcription coregulator activity"/>
    <property type="evidence" value="ECO:0000318"/>
    <property type="project" value="GO_Central"/>
</dbReference>
<dbReference type="GO" id="GO:0006357">
    <property type="term" value="P:regulation of transcription by RNA polymerase II"/>
    <property type="evidence" value="ECO:0000318"/>
    <property type="project" value="GO_Central"/>
</dbReference>
<dbReference type="InterPro" id="IPR055122">
    <property type="entry name" value="Med14_N"/>
</dbReference>
<dbReference type="InterPro" id="IPR013947">
    <property type="entry name" value="Mediator_Med14"/>
</dbReference>
<dbReference type="PANTHER" id="PTHR12809">
    <property type="entry name" value="MEDIATOR COMPLEX SUBUNIT"/>
    <property type="match status" value="1"/>
</dbReference>
<dbReference type="PANTHER" id="PTHR12809:SF2">
    <property type="entry name" value="MEDIATOR OF RNA POLYMERASE II TRANSCRIPTION SUBUNIT 14"/>
    <property type="match status" value="1"/>
</dbReference>
<dbReference type="Pfam" id="PF08638">
    <property type="entry name" value="Med14"/>
    <property type="match status" value="1"/>
</dbReference>
<protein>
    <recommendedName>
        <fullName>Mediator of RNA polymerase II transcription subunit 14</fullName>
    </recommendedName>
    <alternativeName>
        <fullName>Mediator complex subunit 14</fullName>
    </alternativeName>
</protein>
<name>MED14_YARLI</name>